<evidence type="ECO:0000255" key="1">
    <source>
        <dbReference type="HAMAP-Rule" id="MF_01187"/>
    </source>
</evidence>
<name>Y2635_STUS1</name>
<sequence length="61" mass="6714">MDTKLLDILACPLCKGPLKLAEDKSELICKADGLAFPVRDGIPVMLESEARTLDVDERLDK</sequence>
<protein>
    <recommendedName>
        <fullName evidence="1">UPF0434 protein PST_2635</fullName>
    </recommendedName>
</protein>
<gene>
    <name type="ordered locus">PST_2635</name>
</gene>
<reference key="1">
    <citation type="journal article" date="2008" name="Proc. Natl. Acad. Sci. U.S.A.">
        <title>Nitrogen fixation island and rhizosphere competence traits in the genome of root-associated Pseudomonas stutzeri A1501.</title>
        <authorList>
            <person name="Yan Y."/>
            <person name="Yang J."/>
            <person name="Dou Y."/>
            <person name="Chen M."/>
            <person name="Ping S."/>
            <person name="Peng J."/>
            <person name="Lu W."/>
            <person name="Zhang W."/>
            <person name="Yao Z."/>
            <person name="Li H."/>
            <person name="Liu W."/>
            <person name="He S."/>
            <person name="Geng L."/>
            <person name="Zhang X."/>
            <person name="Yang F."/>
            <person name="Yu H."/>
            <person name="Zhan Y."/>
            <person name="Li D."/>
            <person name="Lin Z."/>
            <person name="Wang Y."/>
            <person name="Elmerich C."/>
            <person name="Lin M."/>
            <person name="Jin Q."/>
        </authorList>
    </citation>
    <scope>NUCLEOTIDE SEQUENCE [LARGE SCALE GENOMIC DNA]</scope>
    <source>
        <strain>A1501</strain>
    </source>
</reference>
<accession>A4VMT4</accession>
<comment type="similarity">
    <text evidence="1">Belongs to the UPF0434 family.</text>
</comment>
<dbReference type="EMBL" id="CP000304">
    <property type="protein sequence ID" value="ABP80285.1"/>
    <property type="molecule type" value="Genomic_DNA"/>
</dbReference>
<dbReference type="RefSeq" id="WP_011913743.1">
    <property type="nucleotide sequence ID" value="NC_009434.1"/>
</dbReference>
<dbReference type="SMR" id="A4VMT4"/>
<dbReference type="KEGG" id="psa:PST_2635"/>
<dbReference type="eggNOG" id="COG2835">
    <property type="taxonomic scope" value="Bacteria"/>
</dbReference>
<dbReference type="HOGENOM" id="CLU_155659_3_1_6"/>
<dbReference type="Proteomes" id="UP000000233">
    <property type="component" value="Chromosome"/>
</dbReference>
<dbReference type="GO" id="GO:0005829">
    <property type="term" value="C:cytosol"/>
    <property type="evidence" value="ECO:0007669"/>
    <property type="project" value="TreeGrafter"/>
</dbReference>
<dbReference type="FunFam" id="2.20.25.10:FF:000002">
    <property type="entry name" value="UPF0434 protein YcaR"/>
    <property type="match status" value="1"/>
</dbReference>
<dbReference type="Gene3D" id="2.20.25.10">
    <property type="match status" value="1"/>
</dbReference>
<dbReference type="HAMAP" id="MF_01187">
    <property type="entry name" value="UPF0434"/>
    <property type="match status" value="1"/>
</dbReference>
<dbReference type="InterPro" id="IPR005651">
    <property type="entry name" value="Trm112-like"/>
</dbReference>
<dbReference type="PANTHER" id="PTHR33505:SF4">
    <property type="entry name" value="PROTEIN PREY, MITOCHONDRIAL"/>
    <property type="match status" value="1"/>
</dbReference>
<dbReference type="PANTHER" id="PTHR33505">
    <property type="entry name" value="ZGC:162634"/>
    <property type="match status" value="1"/>
</dbReference>
<dbReference type="Pfam" id="PF03966">
    <property type="entry name" value="Trm112p"/>
    <property type="match status" value="1"/>
</dbReference>
<dbReference type="SUPFAM" id="SSF158997">
    <property type="entry name" value="Trm112p-like"/>
    <property type="match status" value="1"/>
</dbReference>
<keyword id="KW-1185">Reference proteome</keyword>
<proteinExistence type="inferred from homology"/>
<organism>
    <name type="scientific">Stutzerimonas stutzeri (strain A1501)</name>
    <name type="common">Pseudomonas stutzeri</name>
    <dbReference type="NCBI Taxonomy" id="379731"/>
    <lineage>
        <taxon>Bacteria</taxon>
        <taxon>Pseudomonadati</taxon>
        <taxon>Pseudomonadota</taxon>
        <taxon>Gammaproteobacteria</taxon>
        <taxon>Pseudomonadales</taxon>
        <taxon>Pseudomonadaceae</taxon>
        <taxon>Stutzerimonas</taxon>
    </lineage>
</organism>
<feature type="chain" id="PRO_1000065851" description="UPF0434 protein PST_2635">
    <location>
        <begin position="1"/>
        <end position="61"/>
    </location>
</feature>